<reference key="1">
    <citation type="journal article" date="2003" name="Genome Res.">
        <title>Genome sequence of an M3 strain of Streptococcus pyogenes reveals a large-scale genomic rearrangement in invasive strains and new insights into phage evolution.</title>
        <authorList>
            <person name="Nakagawa I."/>
            <person name="Kurokawa K."/>
            <person name="Yamashita A."/>
            <person name="Nakata M."/>
            <person name="Tomiyasu Y."/>
            <person name="Okahashi N."/>
            <person name="Kawabata S."/>
            <person name="Yamazaki K."/>
            <person name="Shiba T."/>
            <person name="Yasunaga T."/>
            <person name="Hayashi H."/>
            <person name="Hattori M."/>
            <person name="Hamada S."/>
        </authorList>
    </citation>
    <scope>NUCLEOTIDE SEQUENCE [LARGE SCALE GENOMIC DNA]</scope>
    <source>
        <strain>SSI-1</strain>
    </source>
</reference>
<comment type="similarity">
    <text evidence="1">Belongs to the bacterial ribosomal protein bL33 family.</text>
</comment>
<keyword id="KW-0687">Ribonucleoprotein</keyword>
<keyword id="KW-0689">Ribosomal protein</keyword>
<protein>
    <recommendedName>
        <fullName evidence="1">Large ribosomal subunit protein bL33B</fullName>
    </recommendedName>
    <alternativeName>
        <fullName evidence="1">50S ribosomal protein L33 2</fullName>
    </alternativeName>
</protein>
<evidence type="ECO:0000255" key="1">
    <source>
        <dbReference type="HAMAP-Rule" id="MF_00294"/>
    </source>
</evidence>
<feature type="chain" id="PRO_0000411511" description="Large ribosomal subunit protein bL33B">
    <location>
        <begin position="1"/>
        <end position="50"/>
    </location>
</feature>
<organism>
    <name type="scientific">Streptococcus pyogenes serotype M3 (strain SSI-1)</name>
    <dbReference type="NCBI Taxonomy" id="193567"/>
    <lineage>
        <taxon>Bacteria</taxon>
        <taxon>Bacillati</taxon>
        <taxon>Bacillota</taxon>
        <taxon>Bacilli</taxon>
        <taxon>Lactobacillales</taxon>
        <taxon>Streptococcaceae</taxon>
        <taxon>Streptococcus</taxon>
    </lineage>
</organism>
<name>RL332_STRPQ</name>
<dbReference type="EMBL" id="BA000034">
    <property type="protein sequence ID" value="BAC64850.1"/>
    <property type="molecule type" value="Genomic_DNA"/>
</dbReference>
<dbReference type="SMR" id="P0DE43"/>
<dbReference type="KEGG" id="sps:SPs1755"/>
<dbReference type="HOGENOM" id="CLU_190949_0_1_9"/>
<dbReference type="GO" id="GO:0005737">
    <property type="term" value="C:cytoplasm"/>
    <property type="evidence" value="ECO:0007669"/>
    <property type="project" value="UniProtKB-ARBA"/>
</dbReference>
<dbReference type="GO" id="GO:1990904">
    <property type="term" value="C:ribonucleoprotein complex"/>
    <property type="evidence" value="ECO:0007669"/>
    <property type="project" value="UniProtKB-KW"/>
</dbReference>
<dbReference type="GO" id="GO:0005840">
    <property type="term" value="C:ribosome"/>
    <property type="evidence" value="ECO:0007669"/>
    <property type="project" value="UniProtKB-KW"/>
</dbReference>
<dbReference type="GO" id="GO:0003735">
    <property type="term" value="F:structural constituent of ribosome"/>
    <property type="evidence" value="ECO:0007669"/>
    <property type="project" value="InterPro"/>
</dbReference>
<dbReference type="GO" id="GO:0006412">
    <property type="term" value="P:translation"/>
    <property type="evidence" value="ECO:0007669"/>
    <property type="project" value="UniProtKB-UniRule"/>
</dbReference>
<dbReference type="Gene3D" id="2.20.28.120">
    <property type="entry name" value="Ribosomal protein L33"/>
    <property type="match status" value="1"/>
</dbReference>
<dbReference type="HAMAP" id="MF_00294">
    <property type="entry name" value="Ribosomal_bL33"/>
    <property type="match status" value="1"/>
</dbReference>
<dbReference type="InterPro" id="IPR001705">
    <property type="entry name" value="Ribosomal_bL33"/>
</dbReference>
<dbReference type="InterPro" id="IPR038584">
    <property type="entry name" value="Ribosomal_bL33_sf"/>
</dbReference>
<dbReference type="InterPro" id="IPR011332">
    <property type="entry name" value="Ribosomal_zn-bd"/>
</dbReference>
<dbReference type="NCBIfam" id="NF001764">
    <property type="entry name" value="PRK00504.1"/>
    <property type="match status" value="1"/>
</dbReference>
<dbReference type="NCBIfam" id="TIGR01023">
    <property type="entry name" value="rpmG_bact"/>
    <property type="match status" value="1"/>
</dbReference>
<dbReference type="Pfam" id="PF00471">
    <property type="entry name" value="Ribosomal_L33"/>
    <property type="match status" value="1"/>
</dbReference>
<dbReference type="SUPFAM" id="SSF57829">
    <property type="entry name" value="Zn-binding ribosomal proteins"/>
    <property type="match status" value="1"/>
</dbReference>
<accession>P0DE43</accession>
<accession>Q877X6</accession>
<gene>
    <name evidence="1" type="primary">rpmG2</name>
    <name type="ordered locus">SPs1755</name>
</gene>
<proteinExistence type="inferred from homology"/>
<sequence length="50" mass="5658">MAQKKASLACVECGSRNYSIGVSSTPKPTRLEVNKFCKYCKTYTLHKETR</sequence>